<accession>P20546</accession>
<proteinExistence type="predicted"/>
<sequence>MVIIPGVRCLSLLFLRRRCPLHIISAFTLLAINALILGHTISPVDLSFTICGYEIKSIFDSETDTIVKFNDIMSQ</sequence>
<organism>
    <name type="scientific">Vaccinia virus (strain Copenhagen)</name>
    <name type="common">VACV</name>
    <dbReference type="NCBI Taxonomy" id="10249"/>
    <lineage>
        <taxon>Viruses</taxon>
        <taxon>Varidnaviria</taxon>
        <taxon>Bamfordvirae</taxon>
        <taxon>Nucleocytoviricota</taxon>
        <taxon>Pokkesviricetes</taxon>
        <taxon>Chitovirales</taxon>
        <taxon>Poxviridae</taxon>
        <taxon>Chordopoxvirinae</taxon>
        <taxon>Orthopoxvirus</taxon>
        <taxon>Vaccinia virus</taxon>
    </lineage>
</organism>
<feature type="chain" id="PRO_0000099675" description="Uncharacterized 8.4 kDa protein">
    <location>
        <begin position="1"/>
        <end position="75"/>
    </location>
</feature>
<name>YVBF_VACCC</name>
<gene>
    <name type="ORF">B ORF F</name>
</gene>
<organismHost>
    <name type="scientific">Homo sapiens</name>
    <name type="common">Human</name>
    <dbReference type="NCBI Taxonomy" id="9606"/>
</organismHost>
<keyword id="KW-1185">Reference proteome</keyword>
<protein>
    <recommendedName>
        <fullName>Uncharacterized 8.4 kDa protein</fullName>
    </recommendedName>
</protein>
<dbReference type="EMBL" id="M35027">
    <property type="protein sequence ID" value="AAA48215.1"/>
    <property type="molecule type" value="Genomic_DNA"/>
</dbReference>
<dbReference type="PIR" id="G42529">
    <property type="entry name" value="G42529"/>
</dbReference>
<dbReference type="SMR" id="P20546"/>
<dbReference type="Proteomes" id="UP000008269">
    <property type="component" value="Segment"/>
</dbReference>
<reference key="1">
    <citation type="journal article" date="1990" name="Virology">
        <title>The complete DNA sequence of vaccinia virus.</title>
        <authorList>
            <person name="Goebel S.J."/>
            <person name="Johnson G.P."/>
            <person name="Perkus M.E."/>
            <person name="Davis S.W."/>
            <person name="Winslow J.P."/>
            <person name="Paoletti E."/>
        </authorList>
    </citation>
    <scope>NUCLEOTIDE SEQUENCE [LARGE SCALE GENOMIC DNA]</scope>
</reference>
<reference key="2">
    <citation type="journal article" date="1990" name="Virology">
        <title>Appendix to 'The complete DNA sequence of vaccinia virus'.</title>
        <authorList>
            <person name="Goebel S.J."/>
            <person name="Johnson G.P."/>
            <person name="Perkus M.E."/>
            <person name="Davis S.W."/>
            <person name="Winslow J.P."/>
            <person name="Paoletti E."/>
        </authorList>
    </citation>
    <scope>COMPLETE GENOME</scope>
</reference>